<accession>Q7W736</accession>
<gene>
    <name evidence="1" type="primary">ccmA</name>
    <name type="ordered locus">BPP2699</name>
</gene>
<proteinExistence type="inferred from homology"/>
<feature type="chain" id="PRO_0000092172" description="Cytochrome c biogenesis ATP-binding export protein CcmA">
    <location>
        <begin position="1"/>
        <end position="224"/>
    </location>
</feature>
<feature type="domain" description="ABC transporter" evidence="1">
    <location>
        <begin position="1"/>
        <end position="220"/>
    </location>
</feature>
<feature type="binding site" evidence="1">
    <location>
        <begin position="40"/>
        <end position="47"/>
    </location>
    <ligand>
        <name>ATP</name>
        <dbReference type="ChEBI" id="CHEBI:30616"/>
    </ligand>
</feature>
<sequence length="224" mass="23683">MQNAEAAPALLAAHGLVGRRGGRRPLDLNLRPGQLVHVRGANGSGKTSLLRTLAGLLRPRRGEVRWNGADIHADLPGYYLHMAHLGHDNGCSDALTARENLRYALHVAGAPRAEPELERALRDWGLAAGADAPAARLSQGQGRRLALARVMLSRKRLWLLDEPDAGLDAASLQRLHGMLDAHLAGGGAAVLASHRGGGAWAGCTQTLELDEYAHAEVVGADCLA</sequence>
<name>CCMA_BORPA</name>
<dbReference type="EC" id="7.6.2.5" evidence="1"/>
<dbReference type="EMBL" id="BX640431">
    <property type="protein sequence ID" value="CAE37992.1"/>
    <property type="molecule type" value="Genomic_DNA"/>
</dbReference>
<dbReference type="RefSeq" id="WP_010928683.1">
    <property type="nucleotide sequence ID" value="NC_002928.3"/>
</dbReference>
<dbReference type="SMR" id="Q7W736"/>
<dbReference type="GeneID" id="93204484"/>
<dbReference type="KEGG" id="bpa:BPP2699"/>
<dbReference type="HOGENOM" id="CLU_000604_1_2_4"/>
<dbReference type="Proteomes" id="UP000001421">
    <property type="component" value="Chromosome"/>
</dbReference>
<dbReference type="GO" id="GO:0005886">
    <property type="term" value="C:plasma membrane"/>
    <property type="evidence" value="ECO:0007669"/>
    <property type="project" value="UniProtKB-SubCell"/>
</dbReference>
<dbReference type="GO" id="GO:0015439">
    <property type="term" value="F:ABC-type heme transporter activity"/>
    <property type="evidence" value="ECO:0007669"/>
    <property type="project" value="UniProtKB-EC"/>
</dbReference>
<dbReference type="GO" id="GO:0005524">
    <property type="term" value="F:ATP binding"/>
    <property type="evidence" value="ECO:0007669"/>
    <property type="project" value="UniProtKB-KW"/>
</dbReference>
<dbReference type="GO" id="GO:0016887">
    <property type="term" value="F:ATP hydrolysis activity"/>
    <property type="evidence" value="ECO:0007669"/>
    <property type="project" value="InterPro"/>
</dbReference>
<dbReference type="GO" id="GO:0017004">
    <property type="term" value="P:cytochrome complex assembly"/>
    <property type="evidence" value="ECO:0007669"/>
    <property type="project" value="UniProtKB-KW"/>
</dbReference>
<dbReference type="Gene3D" id="3.40.50.300">
    <property type="entry name" value="P-loop containing nucleotide triphosphate hydrolases"/>
    <property type="match status" value="1"/>
</dbReference>
<dbReference type="InterPro" id="IPR003593">
    <property type="entry name" value="AAA+_ATPase"/>
</dbReference>
<dbReference type="InterPro" id="IPR003439">
    <property type="entry name" value="ABC_transporter-like_ATP-bd"/>
</dbReference>
<dbReference type="InterPro" id="IPR005895">
    <property type="entry name" value="ABC_transptr_haem_export_CcmA"/>
</dbReference>
<dbReference type="InterPro" id="IPR027417">
    <property type="entry name" value="P-loop_NTPase"/>
</dbReference>
<dbReference type="NCBIfam" id="TIGR01189">
    <property type="entry name" value="ccmA"/>
    <property type="match status" value="1"/>
</dbReference>
<dbReference type="PANTHER" id="PTHR43499">
    <property type="entry name" value="ABC TRANSPORTER I FAMILY MEMBER 1"/>
    <property type="match status" value="1"/>
</dbReference>
<dbReference type="PANTHER" id="PTHR43499:SF1">
    <property type="entry name" value="ABC TRANSPORTER I FAMILY MEMBER 1"/>
    <property type="match status" value="1"/>
</dbReference>
<dbReference type="Pfam" id="PF00005">
    <property type="entry name" value="ABC_tran"/>
    <property type="match status" value="1"/>
</dbReference>
<dbReference type="SMART" id="SM00382">
    <property type="entry name" value="AAA"/>
    <property type="match status" value="1"/>
</dbReference>
<dbReference type="SUPFAM" id="SSF52540">
    <property type="entry name" value="P-loop containing nucleoside triphosphate hydrolases"/>
    <property type="match status" value="1"/>
</dbReference>
<dbReference type="PROSITE" id="PS50893">
    <property type="entry name" value="ABC_TRANSPORTER_2"/>
    <property type="match status" value="1"/>
</dbReference>
<dbReference type="PROSITE" id="PS51243">
    <property type="entry name" value="CCMA"/>
    <property type="match status" value="1"/>
</dbReference>
<keyword id="KW-0067">ATP-binding</keyword>
<keyword id="KW-0997">Cell inner membrane</keyword>
<keyword id="KW-1003">Cell membrane</keyword>
<keyword id="KW-0201">Cytochrome c-type biogenesis</keyword>
<keyword id="KW-0472">Membrane</keyword>
<keyword id="KW-0547">Nucleotide-binding</keyword>
<keyword id="KW-1278">Translocase</keyword>
<keyword id="KW-0813">Transport</keyword>
<reference key="1">
    <citation type="journal article" date="2003" name="Nat. Genet.">
        <title>Comparative analysis of the genome sequences of Bordetella pertussis, Bordetella parapertussis and Bordetella bronchiseptica.</title>
        <authorList>
            <person name="Parkhill J."/>
            <person name="Sebaihia M."/>
            <person name="Preston A."/>
            <person name="Murphy L.D."/>
            <person name="Thomson N.R."/>
            <person name="Harris D.E."/>
            <person name="Holden M.T.G."/>
            <person name="Churcher C.M."/>
            <person name="Bentley S.D."/>
            <person name="Mungall K.L."/>
            <person name="Cerdeno-Tarraga A.-M."/>
            <person name="Temple L."/>
            <person name="James K.D."/>
            <person name="Harris B."/>
            <person name="Quail M.A."/>
            <person name="Achtman M."/>
            <person name="Atkin R."/>
            <person name="Baker S."/>
            <person name="Basham D."/>
            <person name="Bason N."/>
            <person name="Cherevach I."/>
            <person name="Chillingworth T."/>
            <person name="Collins M."/>
            <person name="Cronin A."/>
            <person name="Davis P."/>
            <person name="Doggett J."/>
            <person name="Feltwell T."/>
            <person name="Goble A."/>
            <person name="Hamlin N."/>
            <person name="Hauser H."/>
            <person name="Holroyd S."/>
            <person name="Jagels K."/>
            <person name="Leather S."/>
            <person name="Moule S."/>
            <person name="Norberczak H."/>
            <person name="O'Neil S."/>
            <person name="Ormond D."/>
            <person name="Price C."/>
            <person name="Rabbinowitsch E."/>
            <person name="Rutter S."/>
            <person name="Sanders M."/>
            <person name="Saunders D."/>
            <person name="Seeger K."/>
            <person name="Sharp S."/>
            <person name="Simmonds M."/>
            <person name="Skelton J."/>
            <person name="Squares R."/>
            <person name="Squares S."/>
            <person name="Stevens K."/>
            <person name="Unwin L."/>
            <person name="Whitehead S."/>
            <person name="Barrell B.G."/>
            <person name="Maskell D.J."/>
        </authorList>
    </citation>
    <scope>NUCLEOTIDE SEQUENCE [LARGE SCALE GENOMIC DNA]</scope>
    <source>
        <strain>12822 / ATCC BAA-587 / NCTC 13253</strain>
    </source>
</reference>
<comment type="function">
    <text evidence="1">Part of the ABC transporter complex CcmAB involved in the biogenesis of c-type cytochromes; once thought to export heme, this seems not to be the case, but its exact role is uncertain. Responsible for energy coupling to the transport system.</text>
</comment>
<comment type="catalytic activity">
    <reaction evidence="1">
        <text>heme b(in) + ATP + H2O = heme b(out) + ADP + phosphate + H(+)</text>
        <dbReference type="Rhea" id="RHEA:19261"/>
        <dbReference type="ChEBI" id="CHEBI:15377"/>
        <dbReference type="ChEBI" id="CHEBI:15378"/>
        <dbReference type="ChEBI" id="CHEBI:30616"/>
        <dbReference type="ChEBI" id="CHEBI:43474"/>
        <dbReference type="ChEBI" id="CHEBI:60344"/>
        <dbReference type="ChEBI" id="CHEBI:456216"/>
        <dbReference type="EC" id="7.6.2.5"/>
    </reaction>
</comment>
<comment type="subunit">
    <text evidence="1">The complex is composed of two ATP-binding proteins (CcmA) and two transmembrane proteins (CcmB).</text>
</comment>
<comment type="subcellular location">
    <subcellularLocation>
        <location evidence="1">Cell inner membrane</location>
        <topology evidence="1">Peripheral membrane protein</topology>
    </subcellularLocation>
</comment>
<comment type="similarity">
    <text evidence="1">Belongs to the ABC transporter superfamily. CcmA exporter (TC 3.A.1.107) family.</text>
</comment>
<organism>
    <name type="scientific">Bordetella parapertussis (strain 12822 / ATCC BAA-587 / NCTC 13253)</name>
    <dbReference type="NCBI Taxonomy" id="257311"/>
    <lineage>
        <taxon>Bacteria</taxon>
        <taxon>Pseudomonadati</taxon>
        <taxon>Pseudomonadota</taxon>
        <taxon>Betaproteobacteria</taxon>
        <taxon>Burkholderiales</taxon>
        <taxon>Alcaligenaceae</taxon>
        <taxon>Bordetella</taxon>
    </lineage>
</organism>
<evidence type="ECO:0000255" key="1">
    <source>
        <dbReference type="HAMAP-Rule" id="MF_01707"/>
    </source>
</evidence>
<protein>
    <recommendedName>
        <fullName evidence="1">Cytochrome c biogenesis ATP-binding export protein CcmA</fullName>
        <ecNumber evidence="1">7.6.2.5</ecNumber>
    </recommendedName>
    <alternativeName>
        <fullName evidence="1">Heme exporter protein A</fullName>
    </alternativeName>
</protein>